<sequence length="374" mass="42173">MDALCEANGTFAINLLKMLGEEDHLRNVFFSPLSLSSVLTMVLMGAKGNTAAQMSQALCLNESGDVHRGFQSLLREVSTSGPKCLLRTANRLFGEKTCDFLPAFKESCQKFYQADLEELSFAEDTEECRKHINDWVMEKTDGKISEILGAGTVSPLTKLVLVNAIYFKGKWNEQFDRKHTRGMPFKTNQEKKTVQMMFKQAKFKMGHVEEVPAQVLELPYVGAELSMLILLPDENTDLAVVEKALTYEKFRTWTSPEKLTEEKVQVFLPRLKLEASYDLEAFLRSLGMTDAFEEAKADFSGMSAKKNVPMSKVAHKCFVEVNEEGTEAAGATAVVRNSRCCRMEPKFCADHPFLFFIRHRETNSILFCGRFSSP</sequence>
<gene>
    <name type="primary">SERPINB8</name>
</gene>
<name>SPB8_BOVIN</name>
<evidence type="ECO:0000250" key="1"/>
<evidence type="ECO:0000250" key="2">
    <source>
        <dbReference type="UniProtKB" id="P50452"/>
    </source>
</evidence>
<evidence type="ECO:0000305" key="3"/>
<protein>
    <recommendedName>
        <fullName>Serpin B8</fullName>
    </recommendedName>
</protein>
<feature type="chain" id="PRO_0000094110" description="Serpin B8">
    <location>
        <begin position="1"/>
        <end position="374"/>
    </location>
</feature>
<feature type="site" description="Reactive bond" evidence="1">
    <location>
        <begin position="339"/>
        <end position="340"/>
    </location>
</feature>
<reference key="1">
    <citation type="journal article" date="2005" name="BMC Genomics">
        <title>Characterization of 954 bovine full-CDS cDNA sequences.</title>
        <authorList>
            <person name="Harhay G.P."/>
            <person name="Sonstegard T.S."/>
            <person name="Keele J.W."/>
            <person name="Heaton M.P."/>
            <person name="Clawson M.L."/>
            <person name="Snelling W.M."/>
            <person name="Wiedmann R.T."/>
            <person name="Van Tassell C.P."/>
            <person name="Smith T.P.L."/>
        </authorList>
    </citation>
    <scope>NUCLEOTIDE SEQUENCE [LARGE SCALE MRNA]</scope>
</reference>
<keyword id="KW-0963">Cytoplasm</keyword>
<keyword id="KW-0646">Protease inhibitor</keyword>
<keyword id="KW-1185">Reference proteome</keyword>
<keyword id="KW-0722">Serine protease inhibitor</keyword>
<dbReference type="EMBL" id="BT021159">
    <property type="protein sequence ID" value="AAX31341.1"/>
    <property type="molecule type" value="mRNA"/>
</dbReference>
<dbReference type="RefSeq" id="NP_001030364.1">
    <property type="nucleotide sequence ID" value="NM_001035287.1"/>
</dbReference>
<dbReference type="RefSeq" id="XP_015315533.1">
    <property type="nucleotide sequence ID" value="XM_015460047.1"/>
</dbReference>
<dbReference type="SMR" id="Q5BIR5"/>
<dbReference type="FunCoup" id="Q5BIR5">
    <property type="interactions" value="407"/>
</dbReference>
<dbReference type="STRING" id="9913.ENSBTAP00000001597"/>
<dbReference type="MEROPS" id="I04.013"/>
<dbReference type="PaxDb" id="9913-ENSBTAP00000001597"/>
<dbReference type="PeptideAtlas" id="Q5BIR5"/>
<dbReference type="Ensembl" id="ENSBTAT00000001597.5">
    <property type="protein sequence ID" value="ENSBTAP00000001597.4"/>
    <property type="gene ID" value="ENSBTAG00000001207.6"/>
</dbReference>
<dbReference type="GeneID" id="513825"/>
<dbReference type="KEGG" id="bta:513825"/>
<dbReference type="CTD" id="5271"/>
<dbReference type="VEuPathDB" id="HostDB:ENSBTAG00000001207"/>
<dbReference type="eggNOG" id="KOG2392">
    <property type="taxonomic scope" value="Eukaryota"/>
</dbReference>
<dbReference type="GeneTree" id="ENSGT00940000154835"/>
<dbReference type="HOGENOM" id="CLU_023330_0_2_1"/>
<dbReference type="InParanoid" id="Q5BIR5"/>
<dbReference type="OMA" id="RVAHKCF"/>
<dbReference type="OrthoDB" id="671595at2759"/>
<dbReference type="TreeFam" id="TF352619"/>
<dbReference type="Reactome" id="R-BTA-75205">
    <property type="pathway name" value="Dissolution of Fibrin Clot"/>
</dbReference>
<dbReference type="Proteomes" id="UP000009136">
    <property type="component" value="Chromosome 24"/>
</dbReference>
<dbReference type="Bgee" id="ENSBTAG00000001207">
    <property type="expression patterns" value="Expressed in zone of skin and 104 other cell types or tissues"/>
</dbReference>
<dbReference type="GO" id="GO:0005737">
    <property type="term" value="C:cytoplasm"/>
    <property type="evidence" value="ECO:0000318"/>
    <property type="project" value="GO_Central"/>
</dbReference>
<dbReference type="GO" id="GO:0005615">
    <property type="term" value="C:extracellular space"/>
    <property type="evidence" value="ECO:0000318"/>
    <property type="project" value="GO_Central"/>
</dbReference>
<dbReference type="GO" id="GO:0004867">
    <property type="term" value="F:serine-type endopeptidase inhibitor activity"/>
    <property type="evidence" value="ECO:0000318"/>
    <property type="project" value="GO_Central"/>
</dbReference>
<dbReference type="CDD" id="cd19567">
    <property type="entry name" value="serpinB8_CAP-2"/>
    <property type="match status" value="1"/>
</dbReference>
<dbReference type="FunFam" id="3.30.497.10:FF:000018">
    <property type="entry name" value="Serpin family B member 8"/>
    <property type="match status" value="1"/>
</dbReference>
<dbReference type="FunFam" id="2.30.39.10:FF:000014">
    <property type="entry name" value="Serpin family B member 9"/>
    <property type="match status" value="1"/>
</dbReference>
<dbReference type="Gene3D" id="2.30.39.10">
    <property type="entry name" value="Alpha-1-antitrypsin, domain 1"/>
    <property type="match status" value="1"/>
</dbReference>
<dbReference type="Gene3D" id="3.30.497.10">
    <property type="entry name" value="Antithrombin, subunit I, domain 2"/>
    <property type="match status" value="1"/>
</dbReference>
<dbReference type="InterPro" id="IPR023795">
    <property type="entry name" value="Serpin_CS"/>
</dbReference>
<dbReference type="InterPro" id="IPR023796">
    <property type="entry name" value="Serpin_dom"/>
</dbReference>
<dbReference type="InterPro" id="IPR000215">
    <property type="entry name" value="Serpin_fam"/>
</dbReference>
<dbReference type="InterPro" id="IPR036186">
    <property type="entry name" value="Serpin_sf"/>
</dbReference>
<dbReference type="InterPro" id="IPR042178">
    <property type="entry name" value="Serpin_sf_1"/>
</dbReference>
<dbReference type="InterPro" id="IPR042185">
    <property type="entry name" value="Serpin_sf_2"/>
</dbReference>
<dbReference type="PANTHER" id="PTHR11461">
    <property type="entry name" value="SERINE PROTEASE INHIBITOR, SERPIN"/>
    <property type="match status" value="1"/>
</dbReference>
<dbReference type="PANTHER" id="PTHR11461:SF166">
    <property type="entry name" value="SERPIN B8"/>
    <property type="match status" value="1"/>
</dbReference>
<dbReference type="Pfam" id="PF00079">
    <property type="entry name" value="Serpin"/>
    <property type="match status" value="1"/>
</dbReference>
<dbReference type="SMART" id="SM00093">
    <property type="entry name" value="SERPIN"/>
    <property type="match status" value="1"/>
</dbReference>
<dbReference type="SUPFAM" id="SSF56574">
    <property type="entry name" value="Serpins"/>
    <property type="match status" value="1"/>
</dbReference>
<dbReference type="PROSITE" id="PS00284">
    <property type="entry name" value="SERPIN"/>
    <property type="match status" value="1"/>
</dbReference>
<proteinExistence type="evidence at transcript level"/>
<accession>Q5BIR5</accession>
<organism>
    <name type="scientific">Bos taurus</name>
    <name type="common">Bovine</name>
    <dbReference type="NCBI Taxonomy" id="9913"/>
    <lineage>
        <taxon>Eukaryota</taxon>
        <taxon>Metazoa</taxon>
        <taxon>Chordata</taxon>
        <taxon>Craniata</taxon>
        <taxon>Vertebrata</taxon>
        <taxon>Euteleostomi</taxon>
        <taxon>Mammalia</taxon>
        <taxon>Eutheria</taxon>
        <taxon>Laurasiatheria</taxon>
        <taxon>Artiodactyla</taxon>
        <taxon>Ruminantia</taxon>
        <taxon>Pecora</taxon>
        <taxon>Bovidae</taxon>
        <taxon>Bovinae</taxon>
        <taxon>Bos</taxon>
    </lineage>
</organism>
<comment type="function">
    <text evidence="2">Has an important role in epithelial desmosome-mediated cell-cell adhesion.</text>
</comment>
<comment type="subcellular location">
    <subcellularLocation>
        <location evidence="1">Cytoplasm</location>
    </subcellularLocation>
</comment>
<comment type="similarity">
    <text evidence="3">Belongs to the serpin family. Ov-serpin subfamily.</text>
</comment>